<proteinExistence type="inferred from homology"/>
<feature type="chain" id="PRO_1000065928" description="Orotidine 5'-phosphate decarboxylase">
    <location>
        <begin position="1"/>
        <end position="242"/>
    </location>
</feature>
<feature type="active site" description="Proton donor" evidence="1">
    <location>
        <position position="66"/>
    </location>
</feature>
<feature type="binding site" evidence="1">
    <location>
        <position position="16"/>
    </location>
    <ligand>
        <name>substrate</name>
    </ligand>
</feature>
<feature type="binding site" evidence="1">
    <location>
        <position position="37"/>
    </location>
    <ligand>
        <name>substrate</name>
    </ligand>
</feature>
<feature type="binding site" evidence="1">
    <location>
        <begin position="64"/>
        <end position="73"/>
    </location>
    <ligand>
        <name>substrate</name>
    </ligand>
</feature>
<feature type="binding site" evidence="1">
    <location>
        <position position="128"/>
    </location>
    <ligand>
        <name>substrate</name>
    </ligand>
</feature>
<feature type="binding site" evidence="1">
    <location>
        <position position="190"/>
    </location>
    <ligand>
        <name>substrate</name>
    </ligand>
</feature>
<feature type="binding site" evidence="1">
    <location>
        <position position="199"/>
    </location>
    <ligand>
        <name>substrate</name>
    </ligand>
</feature>
<feature type="binding site" evidence="1">
    <location>
        <position position="219"/>
    </location>
    <ligand>
        <name>substrate</name>
    </ligand>
</feature>
<feature type="binding site" evidence="1">
    <location>
        <position position="220"/>
    </location>
    <ligand>
        <name>substrate</name>
    </ligand>
</feature>
<reference key="1">
    <citation type="journal article" date="2007" name="PLoS Genet.">
        <title>Patterns and implications of gene gain and loss in the evolution of Prochlorococcus.</title>
        <authorList>
            <person name="Kettler G.C."/>
            <person name="Martiny A.C."/>
            <person name="Huang K."/>
            <person name="Zucker J."/>
            <person name="Coleman M.L."/>
            <person name="Rodrigue S."/>
            <person name="Chen F."/>
            <person name="Lapidus A."/>
            <person name="Ferriera S."/>
            <person name="Johnson J."/>
            <person name="Steglich C."/>
            <person name="Church G.M."/>
            <person name="Richardson P."/>
            <person name="Chisholm S.W."/>
        </authorList>
    </citation>
    <scope>NUCLEOTIDE SEQUENCE [LARGE SCALE GENOMIC DNA]</scope>
    <source>
        <strain>MIT 9215</strain>
    </source>
</reference>
<keyword id="KW-0210">Decarboxylase</keyword>
<keyword id="KW-0456">Lyase</keyword>
<keyword id="KW-0665">Pyrimidine biosynthesis</keyword>
<protein>
    <recommendedName>
        <fullName evidence="1">Orotidine 5'-phosphate decarboxylase</fullName>
        <ecNumber evidence="1">4.1.1.23</ecNumber>
    </recommendedName>
    <alternativeName>
        <fullName evidence="1">OMP decarboxylase</fullName>
        <shortName evidence="1">OMPDCase</shortName>
        <shortName evidence="1">OMPdecase</shortName>
    </alternativeName>
</protein>
<name>PYRF_PROM2</name>
<evidence type="ECO:0000255" key="1">
    <source>
        <dbReference type="HAMAP-Rule" id="MF_01200"/>
    </source>
</evidence>
<accession>A8G6D9</accession>
<dbReference type="EC" id="4.1.1.23" evidence="1"/>
<dbReference type="EMBL" id="CP000825">
    <property type="protein sequence ID" value="ABV51170.1"/>
    <property type="molecule type" value="Genomic_DNA"/>
</dbReference>
<dbReference type="RefSeq" id="WP_012008212.1">
    <property type="nucleotide sequence ID" value="NC_009840.1"/>
</dbReference>
<dbReference type="SMR" id="A8G6D9"/>
<dbReference type="STRING" id="93060.P9215_15571"/>
<dbReference type="KEGG" id="pmh:P9215_15571"/>
<dbReference type="eggNOG" id="COG0284">
    <property type="taxonomic scope" value="Bacteria"/>
</dbReference>
<dbReference type="HOGENOM" id="CLU_067069_1_0_3"/>
<dbReference type="OrthoDB" id="9806203at2"/>
<dbReference type="UniPathway" id="UPA00070">
    <property type="reaction ID" value="UER00120"/>
</dbReference>
<dbReference type="Proteomes" id="UP000002014">
    <property type="component" value="Chromosome"/>
</dbReference>
<dbReference type="GO" id="GO:0005829">
    <property type="term" value="C:cytosol"/>
    <property type="evidence" value="ECO:0007669"/>
    <property type="project" value="TreeGrafter"/>
</dbReference>
<dbReference type="GO" id="GO:0004590">
    <property type="term" value="F:orotidine-5'-phosphate decarboxylase activity"/>
    <property type="evidence" value="ECO:0007669"/>
    <property type="project" value="UniProtKB-UniRule"/>
</dbReference>
<dbReference type="GO" id="GO:0006207">
    <property type="term" value="P:'de novo' pyrimidine nucleobase biosynthetic process"/>
    <property type="evidence" value="ECO:0007669"/>
    <property type="project" value="InterPro"/>
</dbReference>
<dbReference type="GO" id="GO:0044205">
    <property type="term" value="P:'de novo' UMP biosynthetic process"/>
    <property type="evidence" value="ECO:0007669"/>
    <property type="project" value="UniProtKB-UniRule"/>
</dbReference>
<dbReference type="CDD" id="cd04725">
    <property type="entry name" value="OMP_decarboxylase_like"/>
    <property type="match status" value="1"/>
</dbReference>
<dbReference type="Gene3D" id="3.20.20.70">
    <property type="entry name" value="Aldolase class I"/>
    <property type="match status" value="1"/>
</dbReference>
<dbReference type="HAMAP" id="MF_01200_B">
    <property type="entry name" value="OMPdecase_type1_B"/>
    <property type="match status" value="1"/>
</dbReference>
<dbReference type="InterPro" id="IPR013785">
    <property type="entry name" value="Aldolase_TIM"/>
</dbReference>
<dbReference type="InterPro" id="IPR014732">
    <property type="entry name" value="OMPdecase"/>
</dbReference>
<dbReference type="InterPro" id="IPR018089">
    <property type="entry name" value="OMPdecase_AS"/>
</dbReference>
<dbReference type="InterPro" id="IPR047596">
    <property type="entry name" value="OMPdecase_bac"/>
</dbReference>
<dbReference type="InterPro" id="IPR001754">
    <property type="entry name" value="OMPdeCOase_dom"/>
</dbReference>
<dbReference type="InterPro" id="IPR011060">
    <property type="entry name" value="RibuloseP-bd_barrel"/>
</dbReference>
<dbReference type="NCBIfam" id="NF001273">
    <property type="entry name" value="PRK00230.1"/>
    <property type="match status" value="1"/>
</dbReference>
<dbReference type="NCBIfam" id="TIGR01740">
    <property type="entry name" value="pyrF"/>
    <property type="match status" value="1"/>
</dbReference>
<dbReference type="PANTHER" id="PTHR32119">
    <property type="entry name" value="OROTIDINE 5'-PHOSPHATE DECARBOXYLASE"/>
    <property type="match status" value="1"/>
</dbReference>
<dbReference type="PANTHER" id="PTHR32119:SF2">
    <property type="entry name" value="OROTIDINE 5'-PHOSPHATE DECARBOXYLASE"/>
    <property type="match status" value="1"/>
</dbReference>
<dbReference type="Pfam" id="PF00215">
    <property type="entry name" value="OMPdecase"/>
    <property type="match status" value="1"/>
</dbReference>
<dbReference type="SMART" id="SM00934">
    <property type="entry name" value="OMPdecase"/>
    <property type="match status" value="1"/>
</dbReference>
<dbReference type="SUPFAM" id="SSF51366">
    <property type="entry name" value="Ribulose-phoshate binding barrel"/>
    <property type="match status" value="1"/>
</dbReference>
<dbReference type="PROSITE" id="PS00156">
    <property type="entry name" value="OMPDECASE"/>
    <property type="match status" value="1"/>
</dbReference>
<organism>
    <name type="scientific">Prochlorococcus marinus (strain MIT 9215)</name>
    <dbReference type="NCBI Taxonomy" id="93060"/>
    <lineage>
        <taxon>Bacteria</taxon>
        <taxon>Bacillati</taxon>
        <taxon>Cyanobacteriota</taxon>
        <taxon>Cyanophyceae</taxon>
        <taxon>Synechococcales</taxon>
        <taxon>Prochlorococcaceae</taxon>
        <taxon>Prochlorococcus</taxon>
    </lineage>
</organism>
<sequence>MNKRFNSEDKIILAIDGLDVSQAKLLLEECPNIKWVKVGLELFVREGPRVIEILKGLNKKIFLDLKFHDIPNTMRAACSQVSKLGVDIISIHASAGLKALKDSKKASLEGATSVSVKPPLVVGITVLTSFSLKDFQTDLDRNNSIEENVLRLAKLSFDAGLDGCVCSPWEAKMLRSIYKDNFELITPGIRLNIDNKDDQNRIMTPSEAIDNGASKLVIGRSISKAIDPNKALIEIFKSIDSD</sequence>
<gene>
    <name evidence="1" type="primary">pyrF</name>
    <name type="ordered locus">P9215_15571</name>
</gene>
<comment type="function">
    <text evidence="1">Catalyzes the decarboxylation of orotidine 5'-monophosphate (OMP) to uridine 5'-monophosphate (UMP).</text>
</comment>
<comment type="catalytic activity">
    <reaction evidence="1">
        <text>orotidine 5'-phosphate + H(+) = UMP + CO2</text>
        <dbReference type="Rhea" id="RHEA:11596"/>
        <dbReference type="ChEBI" id="CHEBI:15378"/>
        <dbReference type="ChEBI" id="CHEBI:16526"/>
        <dbReference type="ChEBI" id="CHEBI:57538"/>
        <dbReference type="ChEBI" id="CHEBI:57865"/>
        <dbReference type="EC" id="4.1.1.23"/>
    </reaction>
</comment>
<comment type="pathway">
    <text evidence="1">Pyrimidine metabolism; UMP biosynthesis via de novo pathway; UMP from orotate: step 2/2.</text>
</comment>
<comment type="subunit">
    <text evidence="1">Homodimer.</text>
</comment>
<comment type="similarity">
    <text evidence="1">Belongs to the OMP decarboxylase family. Type 1 subfamily.</text>
</comment>